<feature type="chain" id="PRO_0000433394" description="Hemoglobin subunit beta-1" evidence="3">
    <location>
        <begin position="1"/>
        <end position="146"/>
    </location>
</feature>
<feature type="domain" description="Globin" evidence="2">
    <location>
        <begin position="2"/>
        <end position="146"/>
    </location>
</feature>
<feature type="binding site" description="distal binding residue" evidence="2">
    <location>
        <position position="63"/>
    </location>
    <ligand>
        <name>heme b</name>
        <dbReference type="ChEBI" id="CHEBI:60344"/>
    </ligand>
    <ligandPart>
        <name>Fe</name>
        <dbReference type="ChEBI" id="CHEBI:18248"/>
    </ligandPart>
</feature>
<feature type="binding site" description="proximal binding residue" evidence="2">
    <location>
        <position position="92"/>
    </location>
    <ligand>
        <name>heme b</name>
        <dbReference type="ChEBI" id="CHEBI:60344"/>
    </ligand>
    <ligandPart>
        <name>Fe</name>
        <dbReference type="ChEBI" id="CHEBI:18248"/>
    </ligandPart>
</feature>
<proteinExistence type="evidence at protein level"/>
<sequence length="146" mass="16243">VHWTEKERTIITGIFSHMDYEDIGPKALSRCLIVYPWTQRHFSCFGNLYNAEAIMGNANVAAHGIKVLHGLDRGVKNMDNIVATYAELSILHSEKLHVDPDNFKLLSDCITIVVAAKMGHAFTGETQAAFQKFLAVVVSALGKQYH</sequence>
<organism evidence="4">
    <name type="scientific">Dissostichus eleginoides</name>
    <name type="common">Patagonian toothfish</name>
    <name type="synonym">Dissostichus amissus</name>
    <dbReference type="NCBI Taxonomy" id="100907"/>
    <lineage>
        <taxon>Eukaryota</taxon>
        <taxon>Metazoa</taxon>
        <taxon>Chordata</taxon>
        <taxon>Craniata</taxon>
        <taxon>Vertebrata</taxon>
        <taxon>Euteleostomi</taxon>
        <taxon>Actinopterygii</taxon>
        <taxon>Neopterygii</taxon>
        <taxon>Teleostei</taxon>
        <taxon>Neoteleostei</taxon>
        <taxon>Acanthomorphata</taxon>
        <taxon>Eupercaria</taxon>
        <taxon>Perciformes</taxon>
        <taxon>Notothenioidei</taxon>
        <taxon>Nototheniidae</taxon>
        <taxon>Dissostichus</taxon>
    </lineage>
</organism>
<name>HBB1_DISEL</name>
<keyword id="KW-0903">Direct protein sequencing</keyword>
<keyword id="KW-0349">Heme</keyword>
<keyword id="KW-0408">Iron</keyword>
<keyword id="KW-0479">Metal-binding</keyword>
<keyword id="KW-0561">Oxygen transport</keyword>
<keyword id="KW-0813">Transport</keyword>
<comment type="function">
    <text evidence="3">Involved in oxygen transport from gills to the various peripheral tissues.</text>
</comment>
<comment type="subunit">
    <text evidence="3">Hb1 is a heterotetramer of two alpha chains and two beta-1 chains.</text>
</comment>
<comment type="tissue specificity">
    <text evidence="3">Red blood cells.</text>
</comment>
<comment type="miscellaneous">
    <text evidence="3">This fish has 2 hemoglobins: Hb1 (major) and the minor Hb2 which constitutes about 5% of the total.</text>
</comment>
<comment type="similarity">
    <text evidence="2">Belongs to the globin family.</text>
</comment>
<dbReference type="SMR" id="C0HJT6"/>
<dbReference type="GO" id="GO:0072562">
    <property type="term" value="C:blood microparticle"/>
    <property type="evidence" value="ECO:0007669"/>
    <property type="project" value="TreeGrafter"/>
</dbReference>
<dbReference type="GO" id="GO:0031838">
    <property type="term" value="C:haptoglobin-hemoglobin complex"/>
    <property type="evidence" value="ECO:0007669"/>
    <property type="project" value="TreeGrafter"/>
</dbReference>
<dbReference type="GO" id="GO:0005833">
    <property type="term" value="C:hemoglobin complex"/>
    <property type="evidence" value="ECO:0007669"/>
    <property type="project" value="InterPro"/>
</dbReference>
<dbReference type="GO" id="GO:0031720">
    <property type="term" value="F:haptoglobin binding"/>
    <property type="evidence" value="ECO:0007669"/>
    <property type="project" value="TreeGrafter"/>
</dbReference>
<dbReference type="GO" id="GO:0020037">
    <property type="term" value="F:heme binding"/>
    <property type="evidence" value="ECO:0007669"/>
    <property type="project" value="InterPro"/>
</dbReference>
<dbReference type="GO" id="GO:0046872">
    <property type="term" value="F:metal ion binding"/>
    <property type="evidence" value="ECO:0007669"/>
    <property type="project" value="UniProtKB-KW"/>
</dbReference>
<dbReference type="GO" id="GO:0043177">
    <property type="term" value="F:organic acid binding"/>
    <property type="evidence" value="ECO:0007669"/>
    <property type="project" value="TreeGrafter"/>
</dbReference>
<dbReference type="GO" id="GO:0019825">
    <property type="term" value="F:oxygen binding"/>
    <property type="evidence" value="ECO:0007669"/>
    <property type="project" value="InterPro"/>
</dbReference>
<dbReference type="GO" id="GO:0005344">
    <property type="term" value="F:oxygen carrier activity"/>
    <property type="evidence" value="ECO:0007669"/>
    <property type="project" value="UniProtKB-KW"/>
</dbReference>
<dbReference type="GO" id="GO:0004601">
    <property type="term" value="F:peroxidase activity"/>
    <property type="evidence" value="ECO:0007669"/>
    <property type="project" value="TreeGrafter"/>
</dbReference>
<dbReference type="GO" id="GO:0042744">
    <property type="term" value="P:hydrogen peroxide catabolic process"/>
    <property type="evidence" value="ECO:0007669"/>
    <property type="project" value="TreeGrafter"/>
</dbReference>
<dbReference type="CDD" id="cd08925">
    <property type="entry name" value="Hb-beta-like"/>
    <property type="match status" value="1"/>
</dbReference>
<dbReference type="FunFam" id="1.10.490.10:FF:000001">
    <property type="entry name" value="Hemoglobin subunit beta"/>
    <property type="match status" value="1"/>
</dbReference>
<dbReference type="Gene3D" id="1.10.490.10">
    <property type="entry name" value="Globins"/>
    <property type="match status" value="1"/>
</dbReference>
<dbReference type="InterPro" id="IPR000971">
    <property type="entry name" value="Globin"/>
</dbReference>
<dbReference type="InterPro" id="IPR009050">
    <property type="entry name" value="Globin-like_sf"/>
</dbReference>
<dbReference type="InterPro" id="IPR012292">
    <property type="entry name" value="Globin/Proto"/>
</dbReference>
<dbReference type="InterPro" id="IPR002337">
    <property type="entry name" value="Hemoglobin_b"/>
</dbReference>
<dbReference type="InterPro" id="IPR050056">
    <property type="entry name" value="Hemoglobin_oxygen_transport"/>
</dbReference>
<dbReference type="PANTHER" id="PTHR11442">
    <property type="entry name" value="HEMOGLOBIN FAMILY MEMBER"/>
    <property type="match status" value="1"/>
</dbReference>
<dbReference type="PANTHER" id="PTHR11442:SF7">
    <property type="entry name" value="HEMOGLOBIN SUBUNIT EPSILON"/>
    <property type="match status" value="1"/>
</dbReference>
<dbReference type="Pfam" id="PF00042">
    <property type="entry name" value="Globin"/>
    <property type="match status" value="1"/>
</dbReference>
<dbReference type="PRINTS" id="PR00814">
    <property type="entry name" value="BETAHAEM"/>
</dbReference>
<dbReference type="SUPFAM" id="SSF46458">
    <property type="entry name" value="Globin-like"/>
    <property type="match status" value="1"/>
</dbReference>
<dbReference type="PROSITE" id="PS01033">
    <property type="entry name" value="GLOBIN"/>
    <property type="match status" value="1"/>
</dbReference>
<gene>
    <name evidence="1" type="primary">hbb1</name>
</gene>
<protein>
    <recommendedName>
        <fullName evidence="4">Hemoglobin subunit beta-1</fullName>
    </recommendedName>
    <alternativeName>
        <fullName evidence="1">Beta-1-globin</fullName>
    </alternativeName>
    <alternativeName>
        <fullName evidence="1">Hemoglobin beta-1 chain</fullName>
    </alternativeName>
</protein>
<evidence type="ECO:0000250" key="1">
    <source>
        <dbReference type="UniProtKB" id="P84610"/>
    </source>
</evidence>
<evidence type="ECO:0000255" key="2">
    <source>
        <dbReference type="PROSITE-ProRule" id="PRU00238"/>
    </source>
</evidence>
<evidence type="ECO:0000269" key="3">
    <source ref="1"/>
</evidence>
<evidence type="ECO:0000303" key="4">
    <source ref="1"/>
</evidence>
<accession>C0HJT6</accession>
<reference key="1">
    <citation type="journal article" date="2015" name="Hydrobiologia">
        <title>Functional characterisation of the haemoglobins of the migratory notothenioid fish Dissostichus eleginoides.</title>
        <authorList>
            <person name="Coppola D."/>
            <person name="Giordano D."/>
            <person name="Abbruzzetti S."/>
            <person name="Marchesani F."/>
            <person name="Balestrieri M."/>
            <person name="di Prisco G."/>
            <person name="Viappiani C."/>
            <person name="Bruno S."/>
            <person name="Verde C."/>
        </authorList>
    </citation>
    <scope>NUCLEOTIDE SEQUENCE [MRNA]</scope>
    <scope>PARTIAL PROTEIN SEQUENCE</scope>
    <scope>FUNCTION</scope>
    <scope>SUBUNIT</scope>
    <scope>TISSUE SPECIFICITY</scope>
    <source>
        <tissue evidence="4">Erythrocyte</tissue>
    </source>
</reference>